<reference key="1">
    <citation type="journal article" date="2004" name="Proc. Natl. Acad. Sci. U.S.A.">
        <title>The genome sequence of the probiotic intestinal bacterium Lactobacillus johnsonii NCC 533.</title>
        <authorList>
            <person name="Pridmore R.D."/>
            <person name="Berger B."/>
            <person name="Desiere F."/>
            <person name="Vilanova D."/>
            <person name="Barretto C."/>
            <person name="Pittet A.-C."/>
            <person name="Zwahlen M.-C."/>
            <person name="Rouvet M."/>
            <person name="Altermann E."/>
            <person name="Barrangou R."/>
            <person name="Mollet B."/>
            <person name="Mercenier A."/>
            <person name="Klaenhammer T."/>
            <person name="Arigoni F."/>
            <person name="Schell M.A."/>
        </authorList>
    </citation>
    <scope>NUCLEOTIDE SEQUENCE [LARGE SCALE GENOMIC DNA]</scope>
    <source>
        <strain>CNCM I-1225 / La1 / NCC 533</strain>
    </source>
</reference>
<gene>
    <name evidence="1" type="primary">rplQ</name>
    <name type="ordered locus">LJ_0362</name>
</gene>
<comment type="subunit">
    <text evidence="1">Part of the 50S ribosomal subunit. Contacts protein L32.</text>
</comment>
<comment type="similarity">
    <text evidence="1">Belongs to the bacterial ribosomal protein bL17 family.</text>
</comment>
<sequence>MAYRKLGRDSAHRKAMLREMTTQLIMNERIVTTETRAKEIRKTTEKMITLGKRGDLSARRKAAAFVRNEIADIHEEKDAVVVKSALQKLFSDIAPRYKDRNGGYTRMYKLANPRKGDAAPMVIIELV</sequence>
<organism>
    <name type="scientific">Lactobacillus johnsonii (strain CNCM I-12250 / La1 / NCC 533)</name>
    <dbReference type="NCBI Taxonomy" id="257314"/>
    <lineage>
        <taxon>Bacteria</taxon>
        <taxon>Bacillati</taxon>
        <taxon>Bacillota</taxon>
        <taxon>Bacilli</taxon>
        <taxon>Lactobacillales</taxon>
        <taxon>Lactobacillaceae</taxon>
        <taxon>Lactobacillus</taxon>
    </lineage>
</organism>
<proteinExistence type="inferred from homology"/>
<evidence type="ECO:0000255" key="1">
    <source>
        <dbReference type="HAMAP-Rule" id="MF_01368"/>
    </source>
</evidence>
<evidence type="ECO:0000305" key="2"/>
<accession>Q74L63</accession>
<name>RL17_LACJO</name>
<keyword id="KW-0687">Ribonucleoprotein</keyword>
<keyword id="KW-0689">Ribosomal protein</keyword>
<dbReference type="EMBL" id="AE017198">
    <property type="protein sequence ID" value="AAS08352.1"/>
    <property type="molecule type" value="Genomic_DNA"/>
</dbReference>
<dbReference type="RefSeq" id="WP_003649454.1">
    <property type="nucleotide sequence ID" value="NC_005362.1"/>
</dbReference>
<dbReference type="SMR" id="Q74L63"/>
<dbReference type="GeneID" id="64333130"/>
<dbReference type="KEGG" id="ljo:LJ_0362"/>
<dbReference type="eggNOG" id="COG0203">
    <property type="taxonomic scope" value="Bacteria"/>
</dbReference>
<dbReference type="HOGENOM" id="CLU_074407_2_2_9"/>
<dbReference type="Proteomes" id="UP000000581">
    <property type="component" value="Chromosome"/>
</dbReference>
<dbReference type="GO" id="GO:0022625">
    <property type="term" value="C:cytosolic large ribosomal subunit"/>
    <property type="evidence" value="ECO:0007669"/>
    <property type="project" value="TreeGrafter"/>
</dbReference>
<dbReference type="GO" id="GO:0003735">
    <property type="term" value="F:structural constituent of ribosome"/>
    <property type="evidence" value="ECO:0007669"/>
    <property type="project" value="InterPro"/>
</dbReference>
<dbReference type="GO" id="GO:0006412">
    <property type="term" value="P:translation"/>
    <property type="evidence" value="ECO:0007669"/>
    <property type="project" value="UniProtKB-UniRule"/>
</dbReference>
<dbReference type="FunFam" id="3.90.1030.10:FF:000002">
    <property type="entry name" value="50S ribosomal protein L17"/>
    <property type="match status" value="1"/>
</dbReference>
<dbReference type="Gene3D" id="3.90.1030.10">
    <property type="entry name" value="Ribosomal protein L17"/>
    <property type="match status" value="1"/>
</dbReference>
<dbReference type="HAMAP" id="MF_01368">
    <property type="entry name" value="Ribosomal_bL17"/>
    <property type="match status" value="1"/>
</dbReference>
<dbReference type="InterPro" id="IPR000456">
    <property type="entry name" value="Ribosomal_bL17"/>
</dbReference>
<dbReference type="InterPro" id="IPR047859">
    <property type="entry name" value="Ribosomal_bL17_CS"/>
</dbReference>
<dbReference type="InterPro" id="IPR036373">
    <property type="entry name" value="Ribosomal_bL17_sf"/>
</dbReference>
<dbReference type="NCBIfam" id="TIGR00059">
    <property type="entry name" value="L17"/>
    <property type="match status" value="1"/>
</dbReference>
<dbReference type="PANTHER" id="PTHR14413:SF16">
    <property type="entry name" value="LARGE RIBOSOMAL SUBUNIT PROTEIN BL17M"/>
    <property type="match status" value="1"/>
</dbReference>
<dbReference type="PANTHER" id="PTHR14413">
    <property type="entry name" value="RIBOSOMAL PROTEIN L17"/>
    <property type="match status" value="1"/>
</dbReference>
<dbReference type="Pfam" id="PF01196">
    <property type="entry name" value="Ribosomal_L17"/>
    <property type="match status" value="1"/>
</dbReference>
<dbReference type="SUPFAM" id="SSF64263">
    <property type="entry name" value="Prokaryotic ribosomal protein L17"/>
    <property type="match status" value="1"/>
</dbReference>
<dbReference type="PROSITE" id="PS01167">
    <property type="entry name" value="RIBOSOMAL_L17"/>
    <property type="match status" value="1"/>
</dbReference>
<feature type="chain" id="PRO_1000055852" description="Large ribosomal subunit protein bL17">
    <location>
        <begin position="1"/>
        <end position="127"/>
    </location>
</feature>
<protein>
    <recommendedName>
        <fullName evidence="1">Large ribosomal subunit protein bL17</fullName>
    </recommendedName>
    <alternativeName>
        <fullName evidence="2">50S ribosomal protein L17</fullName>
    </alternativeName>
</protein>